<feature type="chain" id="PRO_0000298503" description="NADH-quinone oxidoreductase subunit I">
    <location>
        <begin position="1"/>
        <end position="162"/>
    </location>
</feature>
<feature type="domain" description="4Fe-4S ferredoxin-type 1" evidence="1">
    <location>
        <begin position="53"/>
        <end position="83"/>
    </location>
</feature>
<feature type="domain" description="4Fe-4S ferredoxin-type 2" evidence="1">
    <location>
        <begin position="93"/>
        <end position="122"/>
    </location>
</feature>
<feature type="binding site" evidence="1">
    <location>
        <position position="63"/>
    </location>
    <ligand>
        <name>[4Fe-4S] cluster</name>
        <dbReference type="ChEBI" id="CHEBI:49883"/>
        <label>1</label>
    </ligand>
</feature>
<feature type="binding site" evidence="1">
    <location>
        <position position="66"/>
    </location>
    <ligand>
        <name>[4Fe-4S] cluster</name>
        <dbReference type="ChEBI" id="CHEBI:49883"/>
        <label>1</label>
    </ligand>
</feature>
<feature type="binding site" evidence="1">
    <location>
        <position position="69"/>
    </location>
    <ligand>
        <name>[4Fe-4S] cluster</name>
        <dbReference type="ChEBI" id="CHEBI:49883"/>
        <label>1</label>
    </ligand>
</feature>
<feature type="binding site" evidence="1">
    <location>
        <position position="73"/>
    </location>
    <ligand>
        <name>[4Fe-4S] cluster</name>
        <dbReference type="ChEBI" id="CHEBI:49883"/>
        <label>2</label>
    </ligand>
</feature>
<feature type="binding site" evidence="1">
    <location>
        <position position="102"/>
    </location>
    <ligand>
        <name>[4Fe-4S] cluster</name>
        <dbReference type="ChEBI" id="CHEBI:49883"/>
        <label>2</label>
    </ligand>
</feature>
<feature type="binding site" evidence="1">
    <location>
        <position position="105"/>
    </location>
    <ligand>
        <name>[4Fe-4S] cluster</name>
        <dbReference type="ChEBI" id="CHEBI:49883"/>
        <label>2</label>
    </ligand>
</feature>
<feature type="binding site" evidence="1">
    <location>
        <position position="108"/>
    </location>
    <ligand>
        <name>[4Fe-4S] cluster</name>
        <dbReference type="ChEBI" id="CHEBI:49883"/>
        <label>2</label>
    </ligand>
</feature>
<feature type="binding site" evidence="1">
    <location>
        <position position="112"/>
    </location>
    <ligand>
        <name>[4Fe-4S] cluster</name>
        <dbReference type="ChEBI" id="CHEBI:49883"/>
        <label>1</label>
    </ligand>
</feature>
<evidence type="ECO:0000255" key="1">
    <source>
        <dbReference type="HAMAP-Rule" id="MF_01351"/>
    </source>
</evidence>
<sequence>MEAIKDFFGSLMLREMLKGMALTGRYMFSRKITVQFPEEKTPQSPRFRGLHALRRYPNGEERCIACKLCEAVCPAMAITIESEQRDDGSRRTTRYDIDLTKCIFCGFCEESCPVDSIVETHIFEYHGEKRGDLYYTKEMLLAVGDRYETEIAAARTADAAYR</sequence>
<keyword id="KW-0004">4Fe-4S</keyword>
<keyword id="KW-0997">Cell inner membrane</keyword>
<keyword id="KW-1003">Cell membrane</keyword>
<keyword id="KW-0408">Iron</keyword>
<keyword id="KW-0411">Iron-sulfur</keyword>
<keyword id="KW-0472">Membrane</keyword>
<keyword id="KW-0479">Metal-binding</keyword>
<keyword id="KW-0520">NAD</keyword>
<keyword id="KW-0874">Quinone</keyword>
<keyword id="KW-1185">Reference proteome</keyword>
<keyword id="KW-0677">Repeat</keyword>
<keyword id="KW-1278">Translocase</keyword>
<keyword id="KW-0830">Ubiquinone</keyword>
<dbReference type="EC" id="7.1.1.-" evidence="1"/>
<dbReference type="EMBL" id="CU207211">
    <property type="protein sequence ID" value="CAL61973.1"/>
    <property type="molecule type" value="Genomic_DNA"/>
</dbReference>
<dbReference type="SMR" id="A4G636"/>
<dbReference type="STRING" id="204773.HEAR1818"/>
<dbReference type="KEGG" id="har:HEAR1818"/>
<dbReference type="eggNOG" id="COG1143">
    <property type="taxonomic scope" value="Bacteria"/>
</dbReference>
<dbReference type="HOGENOM" id="CLU_067218_5_1_4"/>
<dbReference type="OrthoDB" id="9808559at2"/>
<dbReference type="Proteomes" id="UP000006697">
    <property type="component" value="Chromosome"/>
</dbReference>
<dbReference type="GO" id="GO:0005886">
    <property type="term" value="C:plasma membrane"/>
    <property type="evidence" value="ECO:0007669"/>
    <property type="project" value="UniProtKB-SubCell"/>
</dbReference>
<dbReference type="GO" id="GO:0051539">
    <property type="term" value="F:4 iron, 4 sulfur cluster binding"/>
    <property type="evidence" value="ECO:0007669"/>
    <property type="project" value="UniProtKB-KW"/>
</dbReference>
<dbReference type="GO" id="GO:0005506">
    <property type="term" value="F:iron ion binding"/>
    <property type="evidence" value="ECO:0007669"/>
    <property type="project" value="UniProtKB-UniRule"/>
</dbReference>
<dbReference type="GO" id="GO:0050136">
    <property type="term" value="F:NADH:ubiquinone reductase (non-electrogenic) activity"/>
    <property type="evidence" value="ECO:0007669"/>
    <property type="project" value="UniProtKB-UniRule"/>
</dbReference>
<dbReference type="GO" id="GO:0048038">
    <property type="term" value="F:quinone binding"/>
    <property type="evidence" value="ECO:0007669"/>
    <property type="project" value="UniProtKB-KW"/>
</dbReference>
<dbReference type="GO" id="GO:0009060">
    <property type="term" value="P:aerobic respiration"/>
    <property type="evidence" value="ECO:0007669"/>
    <property type="project" value="TreeGrafter"/>
</dbReference>
<dbReference type="FunFam" id="3.30.70.3270:FF:000003">
    <property type="entry name" value="NADH-quinone oxidoreductase subunit I"/>
    <property type="match status" value="1"/>
</dbReference>
<dbReference type="Gene3D" id="3.30.70.3270">
    <property type="match status" value="1"/>
</dbReference>
<dbReference type="HAMAP" id="MF_01351">
    <property type="entry name" value="NDH1_NuoI"/>
    <property type="match status" value="1"/>
</dbReference>
<dbReference type="InterPro" id="IPR017896">
    <property type="entry name" value="4Fe4S_Fe-S-bd"/>
</dbReference>
<dbReference type="InterPro" id="IPR017900">
    <property type="entry name" value="4Fe4S_Fe_S_CS"/>
</dbReference>
<dbReference type="InterPro" id="IPR010226">
    <property type="entry name" value="NADH_quinone_OxRdtase_chainI"/>
</dbReference>
<dbReference type="NCBIfam" id="TIGR01971">
    <property type="entry name" value="NuoI"/>
    <property type="match status" value="1"/>
</dbReference>
<dbReference type="NCBIfam" id="NF004538">
    <property type="entry name" value="PRK05888.1-4"/>
    <property type="match status" value="1"/>
</dbReference>
<dbReference type="NCBIfam" id="NF004539">
    <property type="entry name" value="PRK05888.1-5"/>
    <property type="match status" value="1"/>
</dbReference>
<dbReference type="PANTHER" id="PTHR10849:SF20">
    <property type="entry name" value="NADH DEHYDROGENASE [UBIQUINONE] IRON-SULFUR PROTEIN 8, MITOCHONDRIAL"/>
    <property type="match status" value="1"/>
</dbReference>
<dbReference type="PANTHER" id="PTHR10849">
    <property type="entry name" value="NADH DEHYDROGENASE UBIQUINONE IRON-SULFUR PROTEIN 8, MITOCHONDRIAL"/>
    <property type="match status" value="1"/>
</dbReference>
<dbReference type="Pfam" id="PF12838">
    <property type="entry name" value="Fer4_7"/>
    <property type="match status" value="1"/>
</dbReference>
<dbReference type="SUPFAM" id="SSF54862">
    <property type="entry name" value="4Fe-4S ferredoxins"/>
    <property type="match status" value="1"/>
</dbReference>
<dbReference type="PROSITE" id="PS00198">
    <property type="entry name" value="4FE4S_FER_1"/>
    <property type="match status" value="2"/>
</dbReference>
<dbReference type="PROSITE" id="PS51379">
    <property type="entry name" value="4FE4S_FER_2"/>
    <property type="match status" value="2"/>
</dbReference>
<accession>A4G636</accession>
<protein>
    <recommendedName>
        <fullName evidence="1">NADH-quinone oxidoreductase subunit I</fullName>
        <ecNumber evidence="1">7.1.1.-</ecNumber>
    </recommendedName>
    <alternativeName>
        <fullName evidence="1">NADH dehydrogenase I subunit I</fullName>
    </alternativeName>
    <alternativeName>
        <fullName evidence="1">NDH-1 subunit I</fullName>
    </alternativeName>
</protein>
<name>NUOI_HERAR</name>
<organism>
    <name type="scientific">Herminiimonas arsenicoxydans</name>
    <dbReference type="NCBI Taxonomy" id="204773"/>
    <lineage>
        <taxon>Bacteria</taxon>
        <taxon>Pseudomonadati</taxon>
        <taxon>Pseudomonadota</taxon>
        <taxon>Betaproteobacteria</taxon>
        <taxon>Burkholderiales</taxon>
        <taxon>Oxalobacteraceae</taxon>
        <taxon>Herminiimonas</taxon>
    </lineage>
</organism>
<gene>
    <name evidence="1" type="primary">nuoI</name>
    <name type="ordered locus">HEAR1818</name>
</gene>
<comment type="function">
    <text evidence="1">NDH-1 shuttles electrons from NADH, via FMN and iron-sulfur (Fe-S) centers, to quinones in the respiratory chain. The immediate electron acceptor for the enzyme in this species is believed to be ubiquinone. Couples the redox reaction to proton translocation (for every two electrons transferred, four hydrogen ions are translocated across the cytoplasmic membrane), and thus conserves the redox energy in a proton gradient.</text>
</comment>
<comment type="catalytic activity">
    <reaction evidence="1">
        <text>a quinone + NADH + 5 H(+)(in) = a quinol + NAD(+) + 4 H(+)(out)</text>
        <dbReference type="Rhea" id="RHEA:57888"/>
        <dbReference type="ChEBI" id="CHEBI:15378"/>
        <dbReference type="ChEBI" id="CHEBI:24646"/>
        <dbReference type="ChEBI" id="CHEBI:57540"/>
        <dbReference type="ChEBI" id="CHEBI:57945"/>
        <dbReference type="ChEBI" id="CHEBI:132124"/>
    </reaction>
</comment>
<comment type="cofactor">
    <cofactor evidence="1">
        <name>[4Fe-4S] cluster</name>
        <dbReference type="ChEBI" id="CHEBI:49883"/>
    </cofactor>
    <text evidence="1">Binds 2 [4Fe-4S] clusters per subunit.</text>
</comment>
<comment type="subunit">
    <text evidence="1">NDH-1 is composed of 14 different subunits. Subunits NuoA, H, J, K, L, M, N constitute the membrane sector of the complex.</text>
</comment>
<comment type="subcellular location">
    <subcellularLocation>
        <location evidence="1">Cell inner membrane</location>
        <topology evidence="1">Peripheral membrane protein</topology>
    </subcellularLocation>
</comment>
<comment type="similarity">
    <text evidence="1">Belongs to the complex I 23 kDa subunit family.</text>
</comment>
<reference key="1">
    <citation type="journal article" date="2007" name="PLoS Genet.">
        <title>A tale of two oxidation states: bacterial colonization of arsenic-rich environments.</title>
        <authorList>
            <person name="Muller D."/>
            <person name="Medigue C."/>
            <person name="Koechler S."/>
            <person name="Barbe V."/>
            <person name="Barakat M."/>
            <person name="Talla E."/>
            <person name="Bonnefoy V."/>
            <person name="Krin E."/>
            <person name="Arsene-Ploetze F."/>
            <person name="Carapito C."/>
            <person name="Chandler M."/>
            <person name="Cournoyer B."/>
            <person name="Cruveiller S."/>
            <person name="Dossat C."/>
            <person name="Duval S."/>
            <person name="Heymann M."/>
            <person name="Leize E."/>
            <person name="Lieutaud A."/>
            <person name="Lievremont D."/>
            <person name="Makita Y."/>
            <person name="Mangenot S."/>
            <person name="Nitschke W."/>
            <person name="Ortet P."/>
            <person name="Perdrial N."/>
            <person name="Schoepp B."/>
            <person name="Siguier P."/>
            <person name="Simeonova D.D."/>
            <person name="Rouy Z."/>
            <person name="Segurens B."/>
            <person name="Turlin E."/>
            <person name="Vallenet D."/>
            <person name="van Dorsselaer A."/>
            <person name="Weiss S."/>
            <person name="Weissenbach J."/>
            <person name="Lett M.-C."/>
            <person name="Danchin A."/>
            <person name="Bertin P.N."/>
        </authorList>
    </citation>
    <scope>NUCLEOTIDE SEQUENCE [LARGE SCALE GENOMIC DNA]</scope>
    <source>
        <strain>ULPAs1</strain>
    </source>
</reference>
<proteinExistence type="inferred from homology"/>